<gene>
    <name type="primary">taf2</name>
    <name type="ORF">SPAC3A12.05c</name>
</gene>
<sequence>MSQLVDVPARGHQKVAIDIDFASQTIIGRTDITVNPIDSNLQKIVLDCYQAEIHSVYVNGDLTKFSYSDALKKLRIDEPNSTVNQHHQLNLQYEALMNDLGGINIFLSKPPGDELRPLIVSIDFSVHQPIFGITFVGIDPVDHRYPHVFTNNSIIPYSTCSWLPCVDGIWERSTWEFEITLPKTLSSLMHREKTQPSDLNNGANGVDGHDDNYENNRFDHQFNLSNEPDLLEDHDIEVICCGDLLDQVTHPKDMRKKTVYFSVTTPVAPNYIAFAAGPFKHINLTDFREPEDDDAMGSSAIDITGYYLPKYAEEVENTCVFLYKAMDFFVREYGSYPFNSFKLCFVDETNFPIISTPSLVISSNSILYPKDSLDQIYDSTKTLTWALASQWIGVYLIPKAWSDLWLIYGLSYYICGLFLKKLMGNNDYRFRLKKQVYRLLELDIGKPPISQRNINIPIDPNTLDFIALKSPLVIHILERRLTKTGGSLGMSRVIPKLLLQVMSGDMLNGCLSTSHFLKTCEKASHMRLDVFAQQWIYGYGYPIFRVVQRFNRKKMIIEMGIDQVQTKEAPRAPMSDKNFLSDAIRHLNNESIPTGLPVFSGPMTIRIHEADGTPYEHVVELKDSFTKLDIQYNTKYKRISRNRSTKNVKRDGDHNGDDSDYVIRSLGDVLQSDEDIERWHLYDYTKEEEDTMATEAFEWIRVDADFEWICDLRVRQPEHMYVSQLQQDRDVVAQLETIRHFTSESFTVSQQVSTVLLRTLLDNRYYYGIRQEAARALARCAIPELDWVGYYHLRMAYLEKFCFKDSTIPKSNDFSNITEYYVKCAMLESFPNIRDRKGVTPSSVKKLLLDLLCYNDNANNEFSDAYFICLLIDSLVEGLIPRGETVQYAFSDPEHMEFVNQVINEIDRYMRIDACMPSFKNIITCKSLKAKLRLAQTFHLEFGPKELLPYTQEGNYVLVRCIAFNLMLQAGALKYTPLIKYIFYILTNDLSPVVRRSLLYSVQDGLGALARGGTKSDVASEDLIVEEDITKAVEKRIDITSRASISGAIEALRNDLGQNHDFATEIWNAINNPKSDLLTKRNLLMICRVLYKAKSSLLVTLKIPSLIPRLRAIHLGKGKIVIKKAPLKQITSKTKEKSTSPTPPSITINPIKPKGPTLKIKLTNLRSTPPSH</sequence>
<organism>
    <name type="scientific">Schizosaccharomyces pombe (strain 972 / ATCC 24843)</name>
    <name type="common">Fission yeast</name>
    <dbReference type="NCBI Taxonomy" id="284812"/>
    <lineage>
        <taxon>Eukaryota</taxon>
        <taxon>Fungi</taxon>
        <taxon>Dikarya</taxon>
        <taxon>Ascomycota</taxon>
        <taxon>Taphrinomycotina</taxon>
        <taxon>Schizosaccharomycetes</taxon>
        <taxon>Schizosaccharomycetales</taxon>
        <taxon>Schizosaccharomycetaceae</taxon>
        <taxon>Schizosaccharomyces</taxon>
    </lineage>
</organism>
<comment type="function">
    <text evidence="1">Functions as a component of the DNA-binding general transcription factor complex TFIID. Binding of TFIID to a promoter (with or without TATA element) is the initial step in pre-initiation complex (PIC) formation. TFIID plays a key role in the regulation of gene expression by RNA polymerase II through different activities such as transcription activator interaction, core promoter recognition and selectivity, TFIIA and TFIIB interaction, chromatin modification (histone acetylation by taf1), facilitation of DNA opening and initiation of transcription (By similarity).</text>
</comment>
<comment type="subunit">
    <text evidence="1">Component of the DNA-binding general transcription factor complex TFIID.</text>
</comment>
<comment type="subcellular location">
    <subcellularLocation>
        <location evidence="3">Cytoplasm</location>
    </subcellularLocation>
    <subcellularLocation>
        <location evidence="3">Nucleus</location>
    </subcellularLocation>
    <text>Localizes at the barrier septum.</text>
</comment>
<comment type="similarity">
    <text evidence="4">Belongs to the TAF2 family.</text>
</comment>
<protein>
    <recommendedName>
        <fullName>Transcription initiation factor TFIID subunit 2</fullName>
    </recommendedName>
    <alternativeName>
        <fullName>TBP-associated factor 2</fullName>
    </alternativeName>
</protein>
<dbReference type="EMBL" id="CU329670">
    <property type="protein sequence ID" value="CAB08750.3"/>
    <property type="molecule type" value="Genomic_DNA"/>
</dbReference>
<dbReference type="PIR" id="T38673">
    <property type="entry name" value="T38673"/>
</dbReference>
<dbReference type="RefSeq" id="NP_593331.2">
    <property type="nucleotide sequence ID" value="NM_001018762.3"/>
</dbReference>
<dbReference type="SMR" id="P87121"/>
<dbReference type="BioGRID" id="279539">
    <property type="interactions" value="6"/>
</dbReference>
<dbReference type="FunCoup" id="P87121">
    <property type="interactions" value="595"/>
</dbReference>
<dbReference type="STRING" id="284812.P87121"/>
<dbReference type="iPTMnet" id="P87121"/>
<dbReference type="PaxDb" id="4896-SPAC3A12.05c.1"/>
<dbReference type="EnsemblFungi" id="SPAC3A12.05c.1">
    <property type="protein sequence ID" value="SPAC3A12.05c.1:pep"/>
    <property type="gene ID" value="SPAC3A12.05c"/>
</dbReference>
<dbReference type="GeneID" id="2543107"/>
<dbReference type="KEGG" id="spo:2543107"/>
<dbReference type="PomBase" id="SPAC3A12.05c">
    <property type="gene designation" value="taf2"/>
</dbReference>
<dbReference type="VEuPathDB" id="FungiDB:SPAC3A12.05c"/>
<dbReference type="eggNOG" id="KOG1932">
    <property type="taxonomic scope" value="Eukaryota"/>
</dbReference>
<dbReference type="HOGENOM" id="CLU_002317_2_0_1"/>
<dbReference type="InParanoid" id="P87121"/>
<dbReference type="OMA" id="EQPDYQW"/>
<dbReference type="PhylomeDB" id="P87121"/>
<dbReference type="Reactome" id="R-SPO-674695">
    <property type="pathway name" value="RNA Polymerase II Pre-transcription Events"/>
</dbReference>
<dbReference type="Reactome" id="R-SPO-73776">
    <property type="pathway name" value="RNA Polymerase II Promoter Escape"/>
</dbReference>
<dbReference type="Reactome" id="R-SPO-73779">
    <property type="pathway name" value="RNA Polymerase II Transcription Pre-Initiation And Promoter Opening"/>
</dbReference>
<dbReference type="Reactome" id="R-SPO-75953">
    <property type="pathway name" value="RNA Polymerase II Transcription Initiation"/>
</dbReference>
<dbReference type="Reactome" id="R-SPO-76042">
    <property type="pathway name" value="RNA Polymerase II Transcription Initiation And Promoter Clearance"/>
</dbReference>
<dbReference type="PRO" id="PR:P87121"/>
<dbReference type="Proteomes" id="UP000002485">
    <property type="component" value="Chromosome I"/>
</dbReference>
<dbReference type="GO" id="GO:0032153">
    <property type="term" value="C:cell division site"/>
    <property type="evidence" value="ECO:0007005"/>
    <property type="project" value="PomBase"/>
</dbReference>
<dbReference type="GO" id="GO:0000785">
    <property type="term" value="C:chromatin"/>
    <property type="evidence" value="ECO:0000305"/>
    <property type="project" value="PomBase"/>
</dbReference>
<dbReference type="GO" id="GO:0005829">
    <property type="term" value="C:cytosol"/>
    <property type="evidence" value="ECO:0007005"/>
    <property type="project" value="PomBase"/>
</dbReference>
<dbReference type="GO" id="GO:0005634">
    <property type="term" value="C:nucleus"/>
    <property type="evidence" value="ECO:0007005"/>
    <property type="project" value="PomBase"/>
</dbReference>
<dbReference type="GO" id="GO:0005669">
    <property type="term" value="C:transcription factor TFIID complex"/>
    <property type="evidence" value="ECO:0000314"/>
    <property type="project" value="PomBase"/>
</dbReference>
<dbReference type="GO" id="GO:0003682">
    <property type="term" value="F:chromatin binding"/>
    <property type="evidence" value="ECO:0000318"/>
    <property type="project" value="GO_Central"/>
</dbReference>
<dbReference type="GO" id="GO:0016251">
    <property type="term" value="F:RNA polymerase II general transcription initiation factor activity"/>
    <property type="evidence" value="ECO:0000269"/>
    <property type="project" value="PomBase"/>
</dbReference>
<dbReference type="GO" id="GO:0000976">
    <property type="term" value="F:transcription cis-regulatory region binding"/>
    <property type="evidence" value="ECO:0000318"/>
    <property type="project" value="GO_Central"/>
</dbReference>
<dbReference type="GO" id="GO:0006367">
    <property type="term" value="P:transcription initiation at RNA polymerase II promoter"/>
    <property type="evidence" value="ECO:0000269"/>
    <property type="project" value="PomBase"/>
</dbReference>
<dbReference type="CDD" id="cd09839">
    <property type="entry name" value="M1_like_TAF2"/>
    <property type="match status" value="1"/>
</dbReference>
<dbReference type="FunFam" id="1.10.390.10:FF:000011">
    <property type="entry name" value="Transcription initiation factor TFIID subunit"/>
    <property type="match status" value="1"/>
</dbReference>
<dbReference type="Gene3D" id="1.10.390.10">
    <property type="entry name" value="Neutral Protease Domain 2"/>
    <property type="match status" value="1"/>
</dbReference>
<dbReference type="Gene3D" id="2.60.40.1730">
    <property type="entry name" value="tricorn interacting facor f3 domain"/>
    <property type="match status" value="1"/>
</dbReference>
<dbReference type="InterPro" id="IPR042097">
    <property type="entry name" value="Aminopeptidase_N-like_N_sf"/>
</dbReference>
<dbReference type="InterPro" id="IPR027268">
    <property type="entry name" value="Peptidase_M4/M1_CTD_sf"/>
</dbReference>
<dbReference type="InterPro" id="IPR037813">
    <property type="entry name" value="TAF2"/>
</dbReference>
<dbReference type="PANTHER" id="PTHR15137">
    <property type="entry name" value="TRANSCRIPTION INITIATION FACTOR TFIID"/>
    <property type="match status" value="1"/>
</dbReference>
<dbReference type="PANTHER" id="PTHR15137:SF9">
    <property type="entry name" value="TRANSCRIPTION INITIATION FACTOR TFIID SUBUNIT 2"/>
    <property type="match status" value="1"/>
</dbReference>
<dbReference type="Pfam" id="PF25316">
    <property type="entry name" value="TAF2_3rd"/>
    <property type="match status" value="1"/>
</dbReference>
<dbReference type="SUPFAM" id="SSF63737">
    <property type="entry name" value="Leukotriene A4 hydrolase N-terminal domain"/>
    <property type="match status" value="1"/>
</dbReference>
<dbReference type="SUPFAM" id="SSF55486">
    <property type="entry name" value="Metalloproteases ('zincins'), catalytic domain"/>
    <property type="match status" value="1"/>
</dbReference>
<feature type="chain" id="PRO_0000356181" description="Transcription initiation factor TFIID subunit 2">
    <location>
        <begin position="1"/>
        <end position="1172"/>
    </location>
</feature>
<feature type="region of interest" description="Disordered" evidence="2">
    <location>
        <begin position="1131"/>
        <end position="1172"/>
    </location>
</feature>
<feature type="compositionally biased region" description="Low complexity" evidence="2">
    <location>
        <begin position="1145"/>
        <end position="1154"/>
    </location>
</feature>
<reference key="1">
    <citation type="journal article" date="2002" name="Nature">
        <title>The genome sequence of Schizosaccharomyces pombe.</title>
        <authorList>
            <person name="Wood V."/>
            <person name="Gwilliam R."/>
            <person name="Rajandream M.A."/>
            <person name="Lyne M.H."/>
            <person name="Lyne R."/>
            <person name="Stewart A."/>
            <person name="Sgouros J.G."/>
            <person name="Peat N."/>
            <person name="Hayles J."/>
            <person name="Baker S.G."/>
            <person name="Basham D."/>
            <person name="Bowman S."/>
            <person name="Brooks K."/>
            <person name="Brown D."/>
            <person name="Brown S."/>
            <person name="Chillingworth T."/>
            <person name="Churcher C.M."/>
            <person name="Collins M."/>
            <person name="Connor R."/>
            <person name="Cronin A."/>
            <person name="Davis P."/>
            <person name="Feltwell T."/>
            <person name="Fraser A."/>
            <person name="Gentles S."/>
            <person name="Goble A."/>
            <person name="Hamlin N."/>
            <person name="Harris D.E."/>
            <person name="Hidalgo J."/>
            <person name="Hodgson G."/>
            <person name="Holroyd S."/>
            <person name="Hornsby T."/>
            <person name="Howarth S."/>
            <person name="Huckle E.J."/>
            <person name="Hunt S."/>
            <person name="Jagels K."/>
            <person name="James K.D."/>
            <person name="Jones L."/>
            <person name="Jones M."/>
            <person name="Leather S."/>
            <person name="McDonald S."/>
            <person name="McLean J."/>
            <person name="Mooney P."/>
            <person name="Moule S."/>
            <person name="Mungall K.L."/>
            <person name="Murphy L.D."/>
            <person name="Niblett D."/>
            <person name="Odell C."/>
            <person name="Oliver K."/>
            <person name="O'Neil S."/>
            <person name="Pearson D."/>
            <person name="Quail M.A."/>
            <person name="Rabbinowitsch E."/>
            <person name="Rutherford K.M."/>
            <person name="Rutter S."/>
            <person name="Saunders D."/>
            <person name="Seeger K."/>
            <person name="Sharp S."/>
            <person name="Skelton J."/>
            <person name="Simmonds M.N."/>
            <person name="Squares R."/>
            <person name="Squares S."/>
            <person name="Stevens K."/>
            <person name="Taylor K."/>
            <person name="Taylor R.G."/>
            <person name="Tivey A."/>
            <person name="Walsh S.V."/>
            <person name="Warren T."/>
            <person name="Whitehead S."/>
            <person name="Woodward J.R."/>
            <person name="Volckaert G."/>
            <person name="Aert R."/>
            <person name="Robben J."/>
            <person name="Grymonprez B."/>
            <person name="Weltjens I."/>
            <person name="Vanstreels E."/>
            <person name="Rieger M."/>
            <person name="Schaefer M."/>
            <person name="Mueller-Auer S."/>
            <person name="Gabel C."/>
            <person name="Fuchs M."/>
            <person name="Duesterhoeft A."/>
            <person name="Fritzc C."/>
            <person name="Holzer E."/>
            <person name="Moestl D."/>
            <person name="Hilbert H."/>
            <person name="Borzym K."/>
            <person name="Langer I."/>
            <person name="Beck A."/>
            <person name="Lehrach H."/>
            <person name="Reinhardt R."/>
            <person name="Pohl T.M."/>
            <person name="Eger P."/>
            <person name="Zimmermann W."/>
            <person name="Wedler H."/>
            <person name="Wambutt R."/>
            <person name="Purnelle B."/>
            <person name="Goffeau A."/>
            <person name="Cadieu E."/>
            <person name="Dreano S."/>
            <person name="Gloux S."/>
            <person name="Lelaure V."/>
            <person name="Mottier S."/>
            <person name="Galibert F."/>
            <person name="Aves S.J."/>
            <person name="Xiang Z."/>
            <person name="Hunt C."/>
            <person name="Moore K."/>
            <person name="Hurst S.M."/>
            <person name="Lucas M."/>
            <person name="Rochet M."/>
            <person name="Gaillardin C."/>
            <person name="Tallada V.A."/>
            <person name="Garzon A."/>
            <person name="Thode G."/>
            <person name="Daga R.R."/>
            <person name="Cruzado L."/>
            <person name="Jimenez J."/>
            <person name="Sanchez M."/>
            <person name="del Rey F."/>
            <person name="Benito J."/>
            <person name="Dominguez A."/>
            <person name="Revuelta J.L."/>
            <person name="Moreno S."/>
            <person name="Armstrong J."/>
            <person name="Forsburg S.L."/>
            <person name="Cerutti L."/>
            <person name="Lowe T."/>
            <person name="McCombie W.R."/>
            <person name="Paulsen I."/>
            <person name="Potashkin J."/>
            <person name="Shpakovski G.V."/>
            <person name="Ussery D."/>
            <person name="Barrell B.G."/>
            <person name="Nurse P."/>
        </authorList>
    </citation>
    <scope>NUCLEOTIDE SEQUENCE [LARGE SCALE GENOMIC DNA]</scope>
    <source>
        <strain>972 / ATCC 24843</strain>
    </source>
</reference>
<reference key="2">
    <citation type="journal article" date="2006" name="Nat. Biotechnol.">
        <title>ORFeome cloning and global analysis of protein localization in the fission yeast Schizosaccharomyces pombe.</title>
        <authorList>
            <person name="Matsuyama A."/>
            <person name="Arai R."/>
            <person name="Yashiroda Y."/>
            <person name="Shirai A."/>
            <person name="Kamata A."/>
            <person name="Sekido S."/>
            <person name="Kobayashi Y."/>
            <person name="Hashimoto A."/>
            <person name="Hamamoto M."/>
            <person name="Hiraoka Y."/>
            <person name="Horinouchi S."/>
            <person name="Yoshida M."/>
        </authorList>
    </citation>
    <scope>SUBCELLULAR LOCATION [LARGE SCALE ANALYSIS]</scope>
</reference>
<keyword id="KW-0963">Cytoplasm</keyword>
<keyword id="KW-0539">Nucleus</keyword>
<keyword id="KW-1185">Reference proteome</keyword>
<keyword id="KW-0804">Transcription</keyword>
<keyword id="KW-0805">Transcription regulation</keyword>
<accession>P87121</accession>
<name>TAF2_SCHPO</name>
<evidence type="ECO:0000250" key="1"/>
<evidence type="ECO:0000256" key="2">
    <source>
        <dbReference type="SAM" id="MobiDB-lite"/>
    </source>
</evidence>
<evidence type="ECO:0000269" key="3">
    <source>
    </source>
</evidence>
<evidence type="ECO:0000305" key="4"/>
<proteinExistence type="inferred from homology"/>